<name>ENV_HV1AN</name>
<keyword id="KW-0014">AIDS</keyword>
<keyword id="KW-0053">Apoptosis</keyword>
<keyword id="KW-1165">Clathrin-mediated endocytosis of virus by host</keyword>
<keyword id="KW-0165">Cleavage on pair of basic residues</keyword>
<keyword id="KW-0175">Coiled coil</keyword>
<keyword id="KW-1015">Disulfide bond</keyword>
<keyword id="KW-1170">Fusion of virus membrane with host endosomal membrane</keyword>
<keyword id="KW-1168">Fusion of virus membrane with host membrane</keyword>
<keyword id="KW-0325">Glycoprotein</keyword>
<keyword id="KW-1032">Host cell membrane</keyword>
<keyword id="KW-1039">Host endosome</keyword>
<keyword id="KW-1043">Host membrane</keyword>
<keyword id="KW-0945">Host-virus interaction</keyword>
<keyword id="KW-0449">Lipoprotein</keyword>
<keyword id="KW-0472">Membrane</keyword>
<keyword id="KW-0564">Palmitate</keyword>
<keyword id="KW-1185">Reference proteome</keyword>
<keyword id="KW-0732">Signal</keyword>
<keyword id="KW-0812">Transmembrane</keyword>
<keyword id="KW-1133">Transmembrane helix</keyword>
<keyword id="KW-1161">Viral attachment to host cell</keyword>
<keyword id="KW-0261">Viral envelope protein</keyword>
<keyword id="KW-0899">Viral immunoevasion</keyword>
<keyword id="KW-1162">Viral penetration into host cytoplasm</keyword>
<keyword id="KW-0946">Virion</keyword>
<keyword id="KW-1164">Virus endocytosis by host</keyword>
<keyword id="KW-1160">Virus entry into host cell</keyword>
<protein>
    <recommendedName>
        <fullName evidence="1">Envelope glycoprotein gp160</fullName>
    </recommendedName>
    <alternativeName>
        <fullName evidence="1">Env polyprotein</fullName>
    </alternativeName>
    <component>
        <recommendedName>
            <fullName evidence="1">Surface protein gp120</fullName>
            <shortName evidence="1">SU</shortName>
        </recommendedName>
        <alternativeName>
            <fullName evidence="1">Glycoprotein 120</fullName>
            <shortName evidence="1">gp120</shortName>
        </alternativeName>
    </component>
    <component>
        <recommendedName>
            <fullName evidence="1">Transmembrane protein gp41</fullName>
            <shortName evidence="1">TM</shortName>
        </recommendedName>
        <alternativeName>
            <fullName evidence="1">Glycoprotein 41</fullName>
            <shortName evidence="1">gp41</shortName>
        </alternativeName>
    </component>
</protein>
<proteinExistence type="inferred from homology"/>
<dbReference type="EMBL" id="L20587">
    <property type="protein sequence ID" value="AAA99883.1"/>
    <property type="molecule type" value="Genomic_RNA"/>
</dbReference>
<dbReference type="PIR" id="A53034">
    <property type="entry name" value="A53034"/>
</dbReference>
<dbReference type="GlyCosmos" id="Q77377">
    <property type="glycosylation" value="28 sites, No reported glycans"/>
</dbReference>
<dbReference type="Proteomes" id="UP000007689">
    <property type="component" value="Segment"/>
</dbReference>
<dbReference type="GO" id="GO:0044175">
    <property type="term" value="C:host cell endosome membrane"/>
    <property type="evidence" value="ECO:0007669"/>
    <property type="project" value="UniProtKB-SubCell"/>
</dbReference>
<dbReference type="GO" id="GO:0020002">
    <property type="term" value="C:host cell plasma membrane"/>
    <property type="evidence" value="ECO:0007669"/>
    <property type="project" value="UniProtKB-SubCell"/>
</dbReference>
<dbReference type="GO" id="GO:0016020">
    <property type="term" value="C:membrane"/>
    <property type="evidence" value="ECO:0007669"/>
    <property type="project" value="UniProtKB-UniRule"/>
</dbReference>
<dbReference type="GO" id="GO:0019031">
    <property type="term" value="C:viral envelope"/>
    <property type="evidence" value="ECO:0007669"/>
    <property type="project" value="UniProtKB-KW"/>
</dbReference>
<dbReference type="GO" id="GO:0055036">
    <property type="term" value="C:virion membrane"/>
    <property type="evidence" value="ECO:0007669"/>
    <property type="project" value="UniProtKB-SubCell"/>
</dbReference>
<dbReference type="GO" id="GO:0005198">
    <property type="term" value="F:structural molecule activity"/>
    <property type="evidence" value="ECO:0007669"/>
    <property type="project" value="UniProtKB-UniRule"/>
</dbReference>
<dbReference type="GO" id="GO:0075512">
    <property type="term" value="P:clathrin-dependent endocytosis of virus by host cell"/>
    <property type="evidence" value="ECO:0007669"/>
    <property type="project" value="UniProtKB-UniRule"/>
</dbReference>
<dbReference type="GO" id="GO:0039654">
    <property type="term" value="P:fusion of virus membrane with host endosome membrane"/>
    <property type="evidence" value="ECO:0007669"/>
    <property type="project" value="UniProtKB-UniRule"/>
</dbReference>
<dbReference type="GO" id="GO:0019064">
    <property type="term" value="P:fusion of virus membrane with host plasma membrane"/>
    <property type="evidence" value="ECO:0007669"/>
    <property type="project" value="UniProtKB-UniRule"/>
</dbReference>
<dbReference type="GO" id="GO:1903908">
    <property type="term" value="P:positive regulation of plasma membrane raft polarization"/>
    <property type="evidence" value="ECO:0007669"/>
    <property type="project" value="UniProtKB-UniRule"/>
</dbReference>
<dbReference type="GO" id="GO:1903911">
    <property type="term" value="P:positive regulation of receptor clustering"/>
    <property type="evidence" value="ECO:0007669"/>
    <property type="project" value="UniProtKB-UniRule"/>
</dbReference>
<dbReference type="GO" id="GO:0019082">
    <property type="term" value="P:viral protein processing"/>
    <property type="evidence" value="ECO:0007669"/>
    <property type="project" value="UniProtKB-UniRule"/>
</dbReference>
<dbReference type="GO" id="GO:0019062">
    <property type="term" value="P:virion attachment to host cell"/>
    <property type="evidence" value="ECO:0007669"/>
    <property type="project" value="UniProtKB-UniRule"/>
</dbReference>
<dbReference type="CDD" id="cd09909">
    <property type="entry name" value="HIV-1-like_HR1-HR2"/>
    <property type="match status" value="1"/>
</dbReference>
<dbReference type="FunFam" id="2.170.40.20:FF:000005">
    <property type="entry name" value="Envelope glycoprotein gp160"/>
    <property type="match status" value="1"/>
</dbReference>
<dbReference type="Gene3D" id="1.10.287.210">
    <property type="match status" value="1"/>
</dbReference>
<dbReference type="Gene3D" id="2.170.40.20">
    <property type="entry name" value="Human immunodeficiency virus 1, Gp160, envelope glycoprotein"/>
    <property type="match status" value="2"/>
</dbReference>
<dbReference type="Gene3D" id="1.20.5.490">
    <property type="entry name" value="Single helix bin"/>
    <property type="match status" value="1"/>
</dbReference>
<dbReference type="HAMAP" id="MF_04083">
    <property type="entry name" value="HIV_ENV"/>
    <property type="match status" value="1"/>
</dbReference>
<dbReference type="InterPro" id="IPR036377">
    <property type="entry name" value="Gp120_core_sf"/>
</dbReference>
<dbReference type="InterPro" id="IPR037527">
    <property type="entry name" value="Gp160"/>
</dbReference>
<dbReference type="InterPro" id="IPR000328">
    <property type="entry name" value="GP41-like"/>
</dbReference>
<dbReference type="InterPro" id="IPR000777">
    <property type="entry name" value="HIV1_Gp120"/>
</dbReference>
<dbReference type="Pfam" id="PF00516">
    <property type="entry name" value="GP120"/>
    <property type="match status" value="2"/>
</dbReference>
<dbReference type="Pfam" id="PF00517">
    <property type="entry name" value="GP41"/>
    <property type="match status" value="1"/>
</dbReference>
<dbReference type="SUPFAM" id="SSF56502">
    <property type="entry name" value="gp120 core"/>
    <property type="match status" value="1"/>
</dbReference>
<dbReference type="SUPFAM" id="SSF58069">
    <property type="entry name" value="Virus ectodomain"/>
    <property type="match status" value="1"/>
</dbReference>
<reference key="1">
    <citation type="journal article" date="1994" name="J. Virol.">
        <title>Genomic cloning and complete sequence analysis of a highly divergent African human immunodeficiency virus isolate.</title>
        <authorList>
            <person name="Vanden Haesevelde M."/>
            <person name="Decourt J.L."/>
            <person name="De Leys R.J."/>
            <person name="Vanderborght B."/>
            <person name="van der Groen G."/>
            <person name="van Heuverswijn H."/>
            <person name="Saman E."/>
        </authorList>
    </citation>
    <scope>NUCLEOTIDE SEQUENCE [GENOMIC RNA]</scope>
</reference>
<reference key="2">
    <citation type="journal article" date="2003" name="APMIS">
        <title>Pathogens target DC-SIGN to influence their fate DC-SIGN functions as a pathogen receptor with broad specificity.</title>
        <authorList>
            <person name="Geijtenbeek T.B."/>
            <person name="van Kooyk Y."/>
        </authorList>
    </citation>
    <scope>REVIEW</scope>
</reference>
<reference key="3">
    <citation type="journal article" date="2003" name="Biochim. Biophys. Acta">
        <title>The HIV Env-mediated fusion reaction.</title>
        <authorList>
            <person name="Gallo S.A."/>
            <person name="Finnegan C.M."/>
            <person name="Viard M."/>
            <person name="Raviv Y."/>
            <person name="Dimitrov A."/>
            <person name="Rawat S.S."/>
            <person name="Puri A."/>
            <person name="Durell S."/>
            <person name="Blumenthal R."/>
        </authorList>
    </citation>
    <scope>REVIEW</scope>
</reference>
<reference key="4">
    <citation type="journal article" date="2005" name="Cell Death Differ.">
        <title>Mechanisms of apoptosis induction by the HIV-1 envelope.</title>
        <authorList>
            <person name="Perfettini J.-L."/>
            <person name="Castedo M."/>
            <person name="Roumier T."/>
            <person name="Andreau K."/>
            <person name="Nardacci R."/>
            <person name="Piacentini M."/>
            <person name="Kroemer G."/>
        </authorList>
    </citation>
    <scope>REVIEW</scope>
</reference>
<reference key="5">
    <citation type="journal article" date="2005" name="AIDS Res. Hum. Retroviruses">
        <title>V3: HIV's switch-hitter.</title>
        <authorList>
            <person name="Hartley O."/>
            <person name="Klasse P.J."/>
            <person name="Sattentau Q.J."/>
            <person name="Moore J.P."/>
        </authorList>
    </citation>
    <scope>REVIEW</scope>
</reference>
<reference key="6">
    <citation type="journal article" date="2005" name="Drugs">
        <title>Emerging drug targets for antiretroviral therapy.</title>
        <authorList>
            <person name="Reeves J.D."/>
            <person name="Piefer A.J."/>
        </authorList>
    </citation>
    <scope>REVIEW</scope>
</reference>
<reference key="7">
    <citation type="journal article" date="2006" name="EMBO J.">
        <title>HIV and the chemokine system: 10 years later.</title>
        <authorList>
            <person name="Lusso P."/>
        </authorList>
    </citation>
    <scope>REVIEW</scope>
</reference>
<comment type="function">
    <molecule>Envelope glycoprotein gp160</molecule>
    <text evidence="1">Oligomerizes in the host endoplasmic reticulum into predominantly trimers. In a second time, gp160 transits in the host Golgi, where glycosylation is completed. The precursor is then proteolytically cleaved in the trans-Golgi and thereby activated by cellular furin or furin-like proteases to produce gp120 and gp41.</text>
</comment>
<comment type="function">
    <molecule>Surface protein gp120</molecule>
    <text evidence="1">Attaches the virus to the host lymphoid cell by binding to the primary receptor CD4. This interaction induces a structural rearrangement creating a high affinity binding site for a chemokine coreceptor like CXCR4 and/or CCR5. Acts as a ligand for CD209/DC-SIGN and CLEC4M/DC-SIGNR, which are respectively found on dendritic cells (DCs), and on endothelial cells of liver sinusoids and lymph node sinuses. These interactions allow capture of viral particles at mucosal surfaces by these cells and subsequent transmission to permissive cells. HIV subverts the migration properties of dendritic cells to gain access to CD4+ T-cells in lymph nodes. Virus transmission to permissive T-cells occurs either in trans (without DCs infection, through viral capture and transmission), or in cis (following DCs productive infection, through the usual CD4-gp120 interaction), thereby inducing a robust infection. In trans infection, bound virions remain infectious over days and it is proposed that they are not degraded, but protected in non-lysosomal acidic organelles within the DCs close to the cell membrane thus contributing to the viral infectious potential during DCs' migration from the periphery to the lymphoid tissues. On arrival at lymphoid tissues, intact virions recycle back to DCs' cell surface allowing virus transmission to CD4+ T-cells.</text>
</comment>
<comment type="function">
    <molecule>Transmembrane protein gp41</molecule>
    <text evidence="1">Acts as a class I viral fusion protein. Under the current model, the protein has at least 3 conformational states: pre-fusion native state, pre-hairpin intermediate state, and post-fusion hairpin state. During fusion of viral and target intracellular membranes, the coiled coil regions (heptad repeats) assume a trimer-of-hairpins structure, positioning the fusion peptide in close proximity to the C-terminal region of the ectodomain. The formation of this structure appears to drive apposition and subsequent fusion of viral and target cell membranes. Complete fusion occurs in host cell endosomes and is dynamin-dependent, however some lipid transfer might occur at the plasma membrane. The virus undergoes clathrin-dependent internalization long before endosomal fusion, thus minimizing the surface exposure of conserved viral epitopes during fusion and reducing the efficacy of inhibitors targeting these epitopes. Membranes fusion leads to delivery of the nucleocapsid into the cytoplasm.</text>
</comment>
<comment type="subunit">
    <molecule>Surface protein gp120</molecule>
    <text evidence="1">The mature envelope protein (Env) consists of a homotrimer of non-covalently associated gp120-gp41 heterodimers. The resulting complex protrudes from the virus surface as a spike. There seems to be as few as 10 spikes on the average virion. Interacts with host CD4, CCR5 and CXCR4. Gp120 also interacts with the C-type lectins CD209/DC-SIGN and CLEC4M/DC-SIGNR (collectively referred to as DC-SIGN(R)). Gp120 and gp41 interact with GalCer. Gp120 interacts with host ITGA4/ITGB7 complex; on CD4+ T-cells, this interaction results in rapid activation of integrin ITGAL/LFA-1, which facilitates efficient cell-to-cell spreading of HIV-1. Gp120 interacts with cell-associated heparan sulfate; this interaction increases virus infectivity on permissive cells and may be involved in infection of CD4- cells.</text>
</comment>
<comment type="subunit">
    <molecule>Transmembrane protein gp41</molecule>
    <text evidence="1">The mature envelope protein (Env) consists of a homotrimer of non-covalently associated gp120-gp41 heterodimers. The resulting complex protrudes from the virus surface as a spike. There seems to be as few as 10 spikes on the average virion.</text>
</comment>
<comment type="subcellular location">
    <molecule>Surface protein gp120</molecule>
    <subcellularLocation>
        <location evidence="1">Virion membrane</location>
        <topology evidence="1">Peripheral membrane protein</topology>
    </subcellularLocation>
    <subcellularLocation>
        <location evidence="1">Host cell membrane</location>
        <topology evidence="1">Peripheral membrane protein</topology>
    </subcellularLocation>
    <subcellularLocation>
        <location evidence="1">Host endosome membrane</location>
        <topology evidence="1">Single-pass type I membrane protein</topology>
    </subcellularLocation>
    <text evidence="1">The surface protein is not anchored to the viral envelope, but associates with the extravirion surface through its binding to TM. It is probably concentrated at the site of budding and incorporated into the virions possibly by contacts between the cytoplasmic tail of Env and the N-terminus of Gag.</text>
</comment>
<comment type="subcellular location">
    <molecule>Transmembrane protein gp41</molecule>
    <subcellularLocation>
        <location evidence="1">Virion membrane</location>
        <topology evidence="1">Single-pass type I membrane protein</topology>
    </subcellularLocation>
    <subcellularLocation>
        <location evidence="1">Host cell membrane</location>
        <topology evidence="1">Single-pass type I membrane protein</topology>
    </subcellularLocation>
    <subcellularLocation>
        <location evidence="1">Host endosome membrane</location>
        <topology evidence="1">Single-pass type I membrane protein</topology>
    </subcellularLocation>
    <text evidence="1">It is probably concentrated at the site of budding and incorporated into the virions possibly by contacts between the cytoplasmic tail of Env and the N-terminus of Gag.</text>
</comment>
<comment type="domain">
    <text evidence="1">Some of the most genetically diverse regions of the viral genome are present in Env. They are called variable regions 1 through 5 (V1 through V5). Coreceptor usage of gp120 is determined mainly by the primary structure of the third variable region (V3) in the outer domain of gp120. The sequence of V3 determines which coreceptor, CCR5 and/or CXCR4 (corresponding to R5/macrophage, X4/T cell and R5X4/T cell and macrophage tropism), is used to trigger the fusion potential of the Env complex, and hence which cells the virus can infect. Binding to CCR5 involves a region adjacent in addition to V3.</text>
</comment>
<comment type="domain">
    <text evidence="1">The membrane proximal external region (MPER) present in gp41 is a tryptophan-rich region recognized by the antibodies 2F5, Z13, and 4E10. MPER seems to play a role in fusion.</text>
</comment>
<comment type="domain">
    <text evidence="1">The 17 amino acids long immunosuppressive region is present in many retroviral envelope proteins. Synthetic peptides derived from this relatively conserved sequence inhibit immune function in vitro and in vivo.</text>
</comment>
<comment type="domain">
    <text evidence="1">The YXXL motif is involved in determining the exact site of viral release at the surface of infected mononuclear cells and promotes endocytosis. YXXL and di-leucine endocytosis motifs interact directly or indirectly with the clathrin adapter complexes, opperate independently, and their activities are not additive.</text>
</comment>
<comment type="domain">
    <text evidence="1">The CD4-binding region is targeted by the antibody b12.</text>
</comment>
<comment type="PTM">
    <text evidence="1">Highly glycosylated by host. The high number of glycan on the protein is reffered to as 'glycan shield' because it contributes to hide protein sequence from adaptive immune system.</text>
</comment>
<comment type="PTM">
    <text evidence="1">Palmitoylation of the transmembrane protein and of Env polyprotein (prior to its proteolytic cleavage) is essential for their association with host cell membrane lipid rafts. Palmitoylation is therefore required for envelope trafficking to classical lipid rafts, but not for viral replication.</text>
</comment>
<comment type="PTM">
    <text evidence="1">Specific enzymatic cleavages in vivo yield mature proteins. Envelope glycoproteins are synthesized as an inactive precursor that is heavily N-glycosylated and processed likely by host cell furin in the Golgi to yield the mature SU and TM proteins. The cleavage site between SU and TM requires the minimal sequence [KR]-X-[KR]-R. About 2 of the 9 disulfide bonds of gp41 are reduced by P4HB/PDI, following binding to CD4 receptor.</text>
</comment>
<comment type="miscellaneous">
    <text evidence="1">Inhibitors targeting HIV-1 viral envelope proteins are used as antiretroviral drugs. Attachment of virions to the cell surface via non-specific interactions and CD4 binding can be blocked by inhibitors that include cyanovirin-N, cyclotriazadisulfonamide analogs, PRO 2000, TNX 355 and PRO 542. In addition, BMS 806 can block CD4-induced conformational changes. Env interactions with the coreceptor molecules can be targeted by CCR5 antagonists including SCH-D, maraviroc (UK 427857) and aplaviroc (GW 873140), and the CXCR4 antagonist AMD 070. Fusion of viral and cellular membranes can be inhibited by peptides such as enfuvirtide and tifuvirtide (T 1249). Resistance to inhibitors associated with mutations in Env are observed. Most of the time, single mutations confer only a modest reduction in drug susceptibility. Combination of several mutations is usually required to develop a high-level drug resistance.</text>
</comment>
<comment type="miscellaneous">
    <text evidence="1">HIV-1 lineages are divided in three main groups, M (for Major), O (for Outlier), and N (for New, or Non-M, Non-O). The vast majority of strains found worldwide belong to the group M. Group O seems to be endemic to and largely confined to Cameroon and neighboring countries in West Central Africa, where these viruses represent a small minority of HIV-1 strains. The group N is represented by a limited number of isolates from Cameroonian persons. The group M is further subdivided in 9 clades or subtypes (A to D, F to H, J and K).</text>
</comment>
<comment type="similarity">
    <text evidence="1">Belongs to the HIV-1 env protein family.</text>
</comment>
<comment type="online information" name="hivdb">
    <link uri="https://hivdb.stanford.edu"/>
    <text>HIV drug resistance database</text>
</comment>
<comment type="online information" name="HIV drug resistance mutations">
    <link uri="https://www.iasusa.org/hiv-drug-resistance/hiv-drug-resistance-mutations/"/>
</comment>
<sequence>MIVTMKAMEKRNKKLWTLYLAMALITPCLSLRQLYATVYAGVPVWEDATPVLFCASDANLTSTEKHNIWASQACVPTDPTPYEYPLHNVTDDFNIWKNYMVEQMQEDIISLWDQSLKPCVQMTFLCVQMECTNIAGTTNENLMKKCEFNVTTVIKDKKEKKQALFYVSDLMELNETSSTNKTNSKMYTLTNCNSTTITQACPKVSFEPIPIHYCAPAGYAIFKCNSTEFNGTGTCRNITVVTCTHGIRPTVSTQLILNGTLSKGKIRMMAKDILEGGKNIIVTLNSTLNMTCERPQIDIQEMRIGPMAWYSMGIGGTAGNSSRAAYCKYNATDWGKILKQTAERYLELVNNTGSINMTFNHSSGGDLEVTHLHFNCHGEFFYCNTAKMFNYTFSCNGTTCSVSNVSQGNNGTLPCKLRQVVRSWIRGQSGLYAPPIKGNLTCMSNITGMILQMDNTWNSSNNNVTFRPIGGDMKDIWRTELFNYKVVRVKPFSVAPTRIARPVISTRTHREKRAVGLGMLFLGVLSAAGSTMGAAATTLAVQTHTLLKGIVQQQDNLLRAIQAQQQLLRLSXWGIRQLRARLLALETLLQNQQLLSLWGCKGKLVCYTSVKWNRTWIGNESIWDTLTWQEWDRQISNISSTIYEEIQKAQVQQEQNEKKLLELDEWASIWNWLDITKWLWYIKIAIIIVGALVGVRVIMIVLNIVKNIRQGYQPLSLQIPNHHQEEAGTPGRTGGGGGEEGRPRWIPSPQGFLPLLYTDLRTIILWTYHLLSNLASGIQKVISYLRLGLWILGQKIINVCRICAAVTQYWLQELQNSATSLLDTLAVAVANWTDGIIAGIQRIGTGIRNIPRRIRQGLERSLL</sequence>
<organism>
    <name type="scientific">Human immunodeficiency virus type 1 group O (isolate ANT70)</name>
    <name type="common">HIV-1</name>
    <dbReference type="NCBI Taxonomy" id="327105"/>
    <lineage>
        <taxon>Viruses</taxon>
        <taxon>Riboviria</taxon>
        <taxon>Pararnavirae</taxon>
        <taxon>Artverviricota</taxon>
        <taxon>Revtraviricetes</taxon>
        <taxon>Ortervirales</taxon>
        <taxon>Retroviridae</taxon>
        <taxon>Orthoretrovirinae</taxon>
        <taxon>Lentivirus</taxon>
        <taxon>Human immunodeficiency virus type 1</taxon>
    </lineage>
</organism>
<gene>
    <name evidence="1" type="primary">env</name>
</gene>
<evidence type="ECO:0000255" key="1">
    <source>
        <dbReference type="HAMAP-Rule" id="MF_04083"/>
    </source>
</evidence>
<accession>Q77377</accession>
<feature type="signal peptide" evidence="1">
    <location>
        <begin position="1"/>
        <end position="32"/>
    </location>
</feature>
<feature type="chain" id="PRO_0000244669" description="Envelope glycoprotein gp160" evidence="1">
    <location>
        <begin position="33"/>
        <end position="863"/>
    </location>
</feature>
<feature type="chain" id="PRO_0000244670" description="Surface protein gp120" evidence="1">
    <location>
        <begin position="33"/>
        <end position="513"/>
    </location>
</feature>
<feature type="chain" id="PRO_0000244671" description="Transmembrane protein gp41" evidence="1">
    <location>
        <begin position="514"/>
        <end position="863"/>
    </location>
</feature>
<feature type="topological domain" description="Extracellular" evidence="1">
    <location>
        <begin position="33"/>
        <end position="684"/>
    </location>
</feature>
<feature type="transmembrane region" description="Helical" evidence="1">
    <location>
        <begin position="685"/>
        <end position="705"/>
    </location>
</feature>
<feature type="topological domain" description="Cytoplasmic" evidence="1">
    <location>
        <begin position="706"/>
        <end position="863"/>
    </location>
</feature>
<feature type="region of interest" description="V1" evidence="1">
    <location>
        <begin position="131"/>
        <end position="145"/>
    </location>
</feature>
<feature type="region of interest" description="V2" evidence="1">
    <location>
        <begin position="146"/>
        <end position="192"/>
    </location>
</feature>
<feature type="region of interest" description="V3" evidence="1">
    <location>
        <begin position="292"/>
        <end position="326"/>
    </location>
</feature>
<feature type="region of interest" description="CD4-binding loop" evidence="1">
    <location>
        <begin position="362"/>
        <end position="372"/>
    </location>
</feature>
<feature type="region of interest" description="V4" evidence="1">
    <location>
        <begin position="383"/>
        <end position="415"/>
    </location>
</feature>
<feature type="region of interest" description="V5">
    <location>
        <begin position="458"/>
        <end position="469"/>
    </location>
</feature>
<feature type="region of interest" description="V5" evidence="1">
    <location>
        <begin position="460"/>
        <end position="469"/>
    </location>
</feature>
<feature type="region of interest" description="Fusion peptide" evidence="1">
    <location>
        <begin position="514"/>
        <end position="534"/>
    </location>
</feature>
<feature type="region of interest" description="Immunosuppression" evidence="1">
    <location>
        <begin position="576"/>
        <end position="594"/>
    </location>
</feature>
<feature type="region of interest" description="MPER; binding to GalCer" evidence="1">
    <location>
        <begin position="662"/>
        <end position="683"/>
    </location>
</feature>
<feature type="coiled-coil region" evidence="1">
    <location>
        <begin position="633"/>
        <end position="667"/>
    </location>
</feature>
<feature type="short sequence motif" description="YXXL motif; contains endocytosis signal" evidence="1">
    <location>
        <begin position="712"/>
        <end position="715"/>
    </location>
</feature>
<feature type="short sequence motif" description="Di-leucine internalization motif" evidence="1">
    <location>
        <begin position="862"/>
        <end position="863"/>
    </location>
</feature>
<feature type="site" description="Cleavage; by host furin" evidence="1">
    <location>
        <begin position="513"/>
        <end position="514"/>
    </location>
</feature>
<feature type="glycosylation site" description="N-linked (GlcNAc...) asparagine; by host" evidence="1">
    <location>
        <position position="59"/>
    </location>
</feature>
<feature type="glycosylation site" description="N-linked (GlcNAc...) asparagine; by host" evidence="1">
    <location>
        <position position="88"/>
    </location>
</feature>
<feature type="glycosylation site" description="N-linked (GlcNAc...) asparagine; by host" evidence="1">
    <location>
        <position position="149"/>
    </location>
</feature>
<feature type="glycosylation site" description="N-linked (GlcNAc...) asparagine; by host" evidence="1">
    <location>
        <position position="174"/>
    </location>
</feature>
<feature type="glycosylation site" description="N-linked (GlcNAc...) asparagine; by host" evidence="1">
    <location>
        <position position="180"/>
    </location>
</feature>
<feature type="glycosylation site" description="N-linked (GlcNAc...) asparagine; by host" evidence="1">
    <location>
        <position position="193"/>
    </location>
</feature>
<feature type="glycosylation site" description="N-linked (GlcNAc...) asparagine; by host" evidence="1">
    <location>
        <position position="225"/>
    </location>
</feature>
<feature type="glycosylation site" description="N-linked (GlcNAc...) asparagine; by host" evidence="1">
    <location>
        <position position="230"/>
    </location>
</feature>
<feature type="glycosylation site" description="N-linked (GlcNAc...) asparagine; by host" evidence="1">
    <location>
        <position position="237"/>
    </location>
</feature>
<feature type="glycosylation site" description="N-linked (GlcNAc...) asparagine; by host" evidence="1">
    <location>
        <position position="258"/>
    </location>
</feature>
<feature type="glycosylation site" description="N-linked (GlcNAc...) asparagine; by host" evidence="1">
    <location>
        <position position="285"/>
    </location>
</feature>
<feature type="glycosylation site" description="N-linked (GlcNAc...) asparagine; by host" evidence="1">
    <location>
        <position position="289"/>
    </location>
</feature>
<feature type="glycosylation site" description="N-linked (GlcNAc...) asparagine; by host" evidence="1">
    <location>
        <position position="320"/>
    </location>
</feature>
<feature type="glycosylation site" description="N-linked (GlcNAc...) asparagine; by host" evidence="1">
    <location>
        <position position="330"/>
    </location>
</feature>
<feature type="glycosylation site" description="N-linked (GlcNAc...) asparagine; by host" evidence="1">
    <location>
        <position position="350"/>
    </location>
</feature>
<feature type="glycosylation site" description="N-linked (GlcNAc...) asparagine; by host" evidence="1">
    <location>
        <position position="356"/>
    </location>
</feature>
<feature type="glycosylation site" description="N-linked (GlcNAc...) asparagine; by host" evidence="1">
    <location>
        <position position="360"/>
    </location>
</feature>
<feature type="glycosylation site" description="N-linked (GlcNAc...) asparagine; by host" evidence="1">
    <location>
        <position position="390"/>
    </location>
</feature>
<feature type="glycosylation site" description="N-linked (GlcNAc...) asparagine; by host" evidence="1">
    <location>
        <position position="396"/>
    </location>
</feature>
<feature type="glycosylation site" description="N-linked (GlcNAc...) asparagine; by host" evidence="1">
    <location>
        <position position="404"/>
    </location>
</feature>
<feature type="glycosylation site" description="N-linked (GlcNAc...) asparagine; by host" evidence="1">
    <location>
        <position position="410"/>
    </location>
</feature>
<feature type="glycosylation site" description="N-linked (GlcNAc...) asparagine; by host" evidence="1">
    <location>
        <position position="439"/>
    </location>
</feature>
<feature type="glycosylation site" description="N-linked (GlcNAc...) asparagine; by host" evidence="1">
    <location>
        <position position="445"/>
    </location>
</feature>
<feature type="glycosylation site" description="N-linked (GlcNAc...) asparagine; by host" evidence="1">
    <location>
        <position position="458"/>
    </location>
</feature>
<feature type="glycosylation site" description="N-linked (GlcNAc...) asparagine; by host" evidence="1">
    <location>
        <position position="463"/>
    </location>
</feature>
<feature type="glycosylation site" description="N-linked (GlcNAc...) asparagine; by host" evidence="1">
    <location>
        <position position="613"/>
    </location>
</feature>
<feature type="glycosylation site" description="N-linked (GlcNAc...) asparagine; by host" evidence="1">
    <location>
        <position position="619"/>
    </location>
</feature>
<feature type="glycosylation site" description="N-linked (GlcNAc...) asparagine; by host" evidence="1">
    <location>
        <position position="637"/>
    </location>
</feature>
<feature type="disulfide bond" evidence="1">
    <location>
        <begin position="54"/>
        <end position="74"/>
    </location>
</feature>
<feature type="disulfide bond" evidence="1">
    <location>
        <begin position="119"/>
        <end position="201"/>
    </location>
</feature>
<feature type="disulfide bond" evidence="1">
    <location>
        <begin position="126"/>
        <end position="192"/>
    </location>
</feature>
<feature type="disulfide bond" evidence="1">
    <location>
        <begin position="131"/>
        <end position="146"/>
    </location>
</feature>
<feature type="disulfide bond" evidence="1">
    <location>
        <begin position="214"/>
        <end position="243"/>
    </location>
</feature>
<feature type="disulfide bond" evidence="1">
    <location>
        <begin position="224"/>
        <end position="235"/>
    </location>
</feature>
<feature type="disulfide bond" evidence="1">
    <location>
        <begin position="292"/>
        <end position="327"/>
    </location>
</feature>
<feature type="disulfide bond" evidence="1">
    <location>
        <begin position="376"/>
        <end position="442"/>
    </location>
</feature>
<feature type="disulfide bond" evidence="1">
    <location>
        <begin position="383"/>
        <end position="415"/>
    </location>
</feature>
<feature type="disulfide bond" evidence="1">
    <location>
        <begin position="600"/>
        <end position="606"/>
    </location>
</feature>
<organismHost>
    <name type="scientific">Homo sapiens</name>
    <name type="common">Human</name>
    <dbReference type="NCBI Taxonomy" id="9606"/>
</organismHost>